<reference key="1">
    <citation type="journal article" date="2010" name="PLoS ONE">
        <title>Genome sequence of Cronobacter sakazakii BAA-894 and comparative genomic hybridization analysis with other Cronobacter species.</title>
        <authorList>
            <person name="Kucerova E."/>
            <person name="Clifton S.W."/>
            <person name="Xia X.Q."/>
            <person name="Long F."/>
            <person name="Porwollik S."/>
            <person name="Fulton L."/>
            <person name="Fronick C."/>
            <person name="Minx P."/>
            <person name="Kyung K."/>
            <person name="Warren W."/>
            <person name="Fulton R."/>
            <person name="Feng D."/>
            <person name="Wollam A."/>
            <person name="Shah N."/>
            <person name="Bhonagiri V."/>
            <person name="Nash W.E."/>
            <person name="Hallsworth-Pepin K."/>
            <person name="Wilson R.K."/>
            <person name="McClelland M."/>
            <person name="Forsythe S.J."/>
        </authorList>
    </citation>
    <scope>NUCLEOTIDE SEQUENCE [LARGE SCALE GENOMIC DNA]</scope>
    <source>
        <strain>ATCC BAA-894</strain>
    </source>
</reference>
<evidence type="ECO:0000255" key="1">
    <source>
        <dbReference type="HAMAP-Rule" id="MF_01196"/>
    </source>
</evidence>
<feature type="chain" id="PRO_0000333896" description="Cell division protein ZapB">
    <location>
        <begin position="1"/>
        <end position="79"/>
    </location>
</feature>
<feature type="coiled-coil region" evidence="1">
    <location>
        <begin position="4"/>
        <end position="78"/>
    </location>
</feature>
<accession>A7ML67</accession>
<sequence>MSFEVFEKLEAKVQQAVDTITLLQMEIEELKDKNNQLAQEVQNAQGSREALEHENHQLREQQHVWQERLQALLGKMEEV</sequence>
<comment type="function">
    <text evidence="1">Non-essential, abundant cell division factor that is required for proper Z-ring formation. It is recruited early to the divisome by direct interaction with FtsZ, stimulating Z-ring assembly and thereby promoting cell division earlier in the cell cycle. Its recruitment to the Z-ring requires functional FtsA or ZipA.</text>
</comment>
<comment type="subunit">
    <text evidence="1">Homodimer. The ends of the coiled-coil dimer bind to each other, forming polymers. Interacts with FtsZ.</text>
</comment>
<comment type="subcellular location">
    <subcellularLocation>
        <location>Cytoplasm</location>
    </subcellularLocation>
    <text evidence="1">Localizes to the septum at mid-cell, in a FtsZ-like pattern.</text>
</comment>
<comment type="similarity">
    <text evidence="1">Belongs to the ZapB family.</text>
</comment>
<keyword id="KW-0131">Cell cycle</keyword>
<keyword id="KW-0132">Cell division</keyword>
<keyword id="KW-0175">Coiled coil</keyword>
<keyword id="KW-0963">Cytoplasm</keyword>
<keyword id="KW-1185">Reference proteome</keyword>
<keyword id="KW-0717">Septation</keyword>
<name>ZAPB_CROS8</name>
<organism>
    <name type="scientific">Cronobacter sakazakii (strain ATCC BAA-894)</name>
    <name type="common">Enterobacter sakazakii</name>
    <dbReference type="NCBI Taxonomy" id="290339"/>
    <lineage>
        <taxon>Bacteria</taxon>
        <taxon>Pseudomonadati</taxon>
        <taxon>Pseudomonadota</taxon>
        <taxon>Gammaproteobacteria</taxon>
        <taxon>Enterobacterales</taxon>
        <taxon>Enterobacteriaceae</taxon>
        <taxon>Cronobacter</taxon>
    </lineage>
</organism>
<proteinExistence type="inferred from homology"/>
<gene>
    <name evidence="1" type="primary">zapB</name>
    <name type="ordered locus">ESA_03833</name>
</gene>
<protein>
    <recommendedName>
        <fullName evidence="1">Cell division protein ZapB</fullName>
    </recommendedName>
</protein>
<dbReference type="EMBL" id="CP000783">
    <property type="protein sequence ID" value="ABU79019.1"/>
    <property type="molecule type" value="Genomic_DNA"/>
</dbReference>
<dbReference type="RefSeq" id="WP_007779254.1">
    <property type="nucleotide sequence ID" value="NC_009778.1"/>
</dbReference>
<dbReference type="SMR" id="A7ML67"/>
<dbReference type="GeneID" id="45717626"/>
<dbReference type="KEGG" id="esa:ESA_03833"/>
<dbReference type="HOGENOM" id="CLU_171174_2_0_6"/>
<dbReference type="Proteomes" id="UP000000260">
    <property type="component" value="Chromosome"/>
</dbReference>
<dbReference type="GO" id="GO:0005737">
    <property type="term" value="C:cytoplasm"/>
    <property type="evidence" value="ECO:0007669"/>
    <property type="project" value="UniProtKB-SubCell"/>
</dbReference>
<dbReference type="GO" id="GO:0000917">
    <property type="term" value="P:division septum assembly"/>
    <property type="evidence" value="ECO:0007669"/>
    <property type="project" value="UniProtKB-KW"/>
</dbReference>
<dbReference type="GO" id="GO:0043093">
    <property type="term" value="P:FtsZ-dependent cytokinesis"/>
    <property type="evidence" value="ECO:0007669"/>
    <property type="project" value="UniProtKB-UniRule"/>
</dbReference>
<dbReference type="Gene3D" id="1.20.5.340">
    <property type="match status" value="1"/>
</dbReference>
<dbReference type="HAMAP" id="MF_01196">
    <property type="entry name" value="ZapB"/>
    <property type="match status" value="1"/>
</dbReference>
<dbReference type="InterPro" id="IPR009252">
    <property type="entry name" value="Cell_div_ZapB"/>
</dbReference>
<dbReference type="NCBIfam" id="NF011951">
    <property type="entry name" value="PRK15422.1"/>
    <property type="match status" value="1"/>
</dbReference>
<dbReference type="Pfam" id="PF06005">
    <property type="entry name" value="ZapB"/>
    <property type="match status" value="1"/>
</dbReference>